<reference key="1">
    <citation type="submission" date="2005-10" db="EMBL/GenBank/DDBJ databases">
        <title>Complete sequence of chromosome 1 of Burkholderia sp. 383.</title>
        <authorList>
            <consortium name="US DOE Joint Genome Institute"/>
            <person name="Copeland A."/>
            <person name="Lucas S."/>
            <person name="Lapidus A."/>
            <person name="Barry K."/>
            <person name="Detter J.C."/>
            <person name="Glavina T."/>
            <person name="Hammon N."/>
            <person name="Israni S."/>
            <person name="Pitluck S."/>
            <person name="Chain P."/>
            <person name="Malfatti S."/>
            <person name="Shin M."/>
            <person name="Vergez L."/>
            <person name="Schmutz J."/>
            <person name="Larimer F."/>
            <person name="Land M."/>
            <person name="Kyrpides N."/>
            <person name="Lykidis A."/>
            <person name="Richardson P."/>
        </authorList>
    </citation>
    <scope>NUCLEOTIDE SEQUENCE [LARGE SCALE GENOMIC DNA]</scope>
    <source>
        <strain>ATCC 17760 / DSM 23089 / LMG 22485 / NCIMB 9086 / R18194 / 383</strain>
    </source>
</reference>
<organism>
    <name type="scientific">Burkholderia lata (strain ATCC 17760 / DSM 23089 / LMG 22485 / NCIMB 9086 / R18194 / 383)</name>
    <dbReference type="NCBI Taxonomy" id="482957"/>
    <lineage>
        <taxon>Bacteria</taxon>
        <taxon>Pseudomonadati</taxon>
        <taxon>Pseudomonadota</taxon>
        <taxon>Betaproteobacteria</taxon>
        <taxon>Burkholderiales</taxon>
        <taxon>Burkholderiaceae</taxon>
        <taxon>Burkholderia</taxon>
        <taxon>Burkholderia cepacia complex</taxon>
    </lineage>
</organism>
<sequence length="149" mass="16612">MSGASARDATLLAFDYGEKRIGVAVGNALTRSARALVVIQNLNREHRFKAVGDLLAEWRPDALVVGLPMHPDGTPHDMTQQAKRFGNQLNGRFGLPVTWVDERYSSVEAEAGLRERNVRGRARAEMLDAEAARVILQQYLDQLSDHEHH</sequence>
<protein>
    <recommendedName>
        <fullName evidence="1">Putative pre-16S rRNA nuclease</fullName>
        <ecNumber evidence="1">3.1.-.-</ecNumber>
    </recommendedName>
</protein>
<proteinExistence type="inferred from homology"/>
<comment type="function">
    <text evidence="1">Could be a nuclease involved in processing of the 5'-end of pre-16S rRNA.</text>
</comment>
<comment type="subcellular location">
    <subcellularLocation>
        <location evidence="1">Cytoplasm</location>
    </subcellularLocation>
</comment>
<comment type="similarity">
    <text evidence="1">Belongs to the YqgF nuclease family.</text>
</comment>
<accession>Q39J04</accession>
<name>YQGF_BURL3</name>
<evidence type="ECO:0000255" key="1">
    <source>
        <dbReference type="HAMAP-Rule" id="MF_00651"/>
    </source>
</evidence>
<feature type="chain" id="PRO_0000257511" description="Putative pre-16S rRNA nuclease">
    <location>
        <begin position="1"/>
        <end position="149"/>
    </location>
</feature>
<gene>
    <name type="ordered locus">Bcep18194_A3963</name>
</gene>
<dbReference type="EC" id="3.1.-.-" evidence="1"/>
<dbReference type="EMBL" id="CP000151">
    <property type="protein sequence ID" value="ABB07562.1"/>
    <property type="molecule type" value="Genomic_DNA"/>
</dbReference>
<dbReference type="SMR" id="Q39J04"/>
<dbReference type="KEGG" id="bur:Bcep18194_A3963"/>
<dbReference type="PATRIC" id="fig|482957.22.peg.839"/>
<dbReference type="HOGENOM" id="CLU_098240_3_0_4"/>
<dbReference type="Proteomes" id="UP000002705">
    <property type="component" value="Chromosome 1"/>
</dbReference>
<dbReference type="GO" id="GO:0005829">
    <property type="term" value="C:cytosol"/>
    <property type="evidence" value="ECO:0007669"/>
    <property type="project" value="TreeGrafter"/>
</dbReference>
<dbReference type="GO" id="GO:0004518">
    <property type="term" value="F:nuclease activity"/>
    <property type="evidence" value="ECO:0007669"/>
    <property type="project" value="UniProtKB-KW"/>
</dbReference>
<dbReference type="GO" id="GO:0000967">
    <property type="term" value="P:rRNA 5'-end processing"/>
    <property type="evidence" value="ECO:0007669"/>
    <property type="project" value="UniProtKB-UniRule"/>
</dbReference>
<dbReference type="CDD" id="cd16964">
    <property type="entry name" value="YqgF"/>
    <property type="match status" value="1"/>
</dbReference>
<dbReference type="Gene3D" id="3.30.420.140">
    <property type="entry name" value="YqgF/RNase H-like domain"/>
    <property type="match status" value="1"/>
</dbReference>
<dbReference type="HAMAP" id="MF_00651">
    <property type="entry name" value="Nuclease_YqgF"/>
    <property type="match status" value="1"/>
</dbReference>
<dbReference type="InterPro" id="IPR012337">
    <property type="entry name" value="RNaseH-like_sf"/>
</dbReference>
<dbReference type="InterPro" id="IPR005227">
    <property type="entry name" value="YqgF"/>
</dbReference>
<dbReference type="InterPro" id="IPR006641">
    <property type="entry name" value="YqgF/RNaseH-like_dom"/>
</dbReference>
<dbReference type="InterPro" id="IPR037027">
    <property type="entry name" value="YqgF/RNaseH-like_dom_sf"/>
</dbReference>
<dbReference type="NCBIfam" id="TIGR00250">
    <property type="entry name" value="RNAse_H_YqgF"/>
    <property type="match status" value="1"/>
</dbReference>
<dbReference type="PANTHER" id="PTHR33317">
    <property type="entry name" value="POLYNUCLEOTIDYL TRANSFERASE, RIBONUCLEASE H-LIKE SUPERFAMILY PROTEIN"/>
    <property type="match status" value="1"/>
</dbReference>
<dbReference type="PANTHER" id="PTHR33317:SF4">
    <property type="entry name" value="POLYNUCLEOTIDYL TRANSFERASE, RIBONUCLEASE H-LIKE SUPERFAMILY PROTEIN"/>
    <property type="match status" value="1"/>
</dbReference>
<dbReference type="Pfam" id="PF03652">
    <property type="entry name" value="RuvX"/>
    <property type="match status" value="1"/>
</dbReference>
<dbReference type="SMART" id="SM00732">
    <property type="entry name" value="YqgFc"/>
    <property type="match status" value="1"/>
</dbReference>
<dbReference type="SUPFAM" id="SSF53098">
    <property type="entry name" value="Ribonuclease H-like"/>
    <property type="match status" value="1"/>
</dbReference>
<keyword id="KW-0963">Cytoplasm</keyword>
<keyword id="KW-0378">Hydrolase</keyword>
<keyword id="KW-0540">Nuclease</keyword>
<keyword id="KW-0690">Ribosome biogenesis</keyword>